<name>YL103_MIMIV</name>
<gene>
    <name type="ordered locus">MIMI_L103</name>
</gene>
<organismHost>
    <name type="scientific">Acanthamoeba polyphaga</name>
    <name type="common">Amoeba</name>
    <dbReference type="NCBI Taxonomy" id="5757"/>
</organismHost>
<accession>Q5UPI1</accession>
<keyword id="KW-0175">Coiled coil</keyword>
<keyword id="KW-0229">DNA integration</keyword>
<keyword id="KW-0233">DNA recombination</keyword>
<keyword id="KW-0238">DNA-binding</keyword>
<keyword id="KW-1185">Reference proteome</keyword>
<feature type="chain" id="PRO_0000247401" description="Putative resolvase L103">
    <location>
        <begin position="1"/>
        <end position="191"/>
    </location>
</feature>
<feature type="domain" description="Resolvase/invertase-type recombinase catalytic" evidence="3">
    <location>
        <begin position="59"/>
        <end position="191"/>
    </location>
</feature>
<feature type="DNA-binding region" description="H-T-H motif" evidence="2">
    <location>
        <begin position="11"/>
        <end position="30"/>
    </location>
</feature>
<feature type="coiled-coil region" evidence="2">
    <location>
        <begin position="65"/>
        <end position="91"/>
    </location>
</feature>
<feature type="active site" description="O-(5'-phospho-DNA)-serine intermediate" evidence="3">
    <location>
        <position position="67"/>
    </location>
</feature>
<comment type="function">
    <text evidence="1">Resolvase catalyzes the resolution (a site-specific recombination) of the cointegrated replicon to yield the final transposition products.</text>
</comment>
<comment type="similarity">
    <text evidence="4">Belongs to the site-specific recombinase resolvase family.</text>
</comment>
<evidence type="ECO:0000250" key="1"/>
<evidence type="ECO:0000255" key="2"/>
<evidence type="ECO:0000255" key="3">
    <source>
        <dbReference type="PROSITE-ProRule" id="PRU01072"/>
    </source>
</evidence>
<evidence type="ECO:0000305" key="4"/>
<proteinExistence type="inferred from homology"/>
<organism>
    <name type="scientific">Acanthamoeba polyphaga mimivirus</name>
    <name type="common">APMV</name>
    <dbReference type="NCBI Taxonomy" id="212035"/>
    <lineage>
        <taxon>Viruses</taxon>
        <taxon>Varidnaviria</taxon>
        <taxon>Bamfordvirae</taxon>
        <taxon>Nucleocytoviricota</taxon>
        <taxon>Megaviricetes</taxon>
        <taxon>Imitervirales</taxon>
        <taxon>Mimiviridae</taxon>
        <taxon>Megamimivirinae</taxon>
        <taxon>Mimivirus</taxon>
        <taxon>Mimivirus bradfordmassiliense</taxon>
    </lineage>
</organism>
<reference key="1">
    <citation type="journal article" date="2004" name="Science">
        <title>The 1.2-megabase genome sequence of Mimivirus.</title>
        <authorList>
            <person name="Raoult D."/>
            <person name="Audic S."/>
            <person name="Robert C."/>
            <person name="Abergel C."/>
            <person name="Renesto P."/>
            <person name="Ogata H."/>
            <person name="La Scola B."/>
            <person name="Susan M."/>
            <person name="Claverie J.-M."/>
        </authorList>
    </citation>
    <scope>NUCLEOTIDE SEQUENCE [LARGE SCALE GENOMIC DNA]</scope>
    <source>
        <strain>Rowbotham-Bradford</strain>
    </source>
</reference>
<dbReference type="EMBL" id="AY653733">
    <property type="protein sequence ID" value="AAV50378.1"/>
    <property type="molecule type" value="Genomic_DNA"/>
</dbReference>
<dbReference type="SMR" id="Q5UPI1"/>
<dbReference type="KEGG" id="vg:9924701"/>
<dbReference type="OrthoDB" id="26022at10239"/>
<dbReference type="Proteomes" id="UP000001134">
    <property type="component" value="Genome"/>
</dbReference>
<dbReference type="GO" id="GO:0003677">
    <property type="term" value="F:DNA binding"/>
    <property type="evidence" value="ECO:0007669"/>
    <property type="project" value="UniProtKB-KW"/>
</dbReference>
<dbReference type="GO" id="GO:0000150">
    <property type="term" value="F:DNA strand exchange activity"/>
    <property type="evidence" value="ECO:0007669"/>
    <property type="project" value="InterPro"/>
</dbReference>
<dbReference type="GO" id="GO:0015074">
    <property type="term" value="P:DNA integration"/>
    <property type="evidence" value="ECO:0007669"/>
    <property type="project" value="UniProtKB-KW"/>
</dbReference>
<dbReference type="GO" id="GO:0006355">
    <property type="term" value="P:regulation of DNA-templated transcription"/>
    <property type="evidence" value="ECO:0007669"/>
    <property type="project" value="InterPro"/>
</dbReference>
<dbReference type="FunFam" id="3.40.50.1390:FF:000002">
    <property type="entry name" value="ORF1 in transposon ISC1904"/>
    <property type="match status" value="1"/>
</dbReference>
<dbReference type="Gene3D" id="1.10.1660.10">
    <property type="match status" value="1"/>
</dbReference>
<dbReference type="Gene3D" id="1.10.287.2170">
    <property type="match status" value="1"/>
</dbReference>
<dbReference type="Gene3D" id="3.40.50.1390">
    <property type="entry name" value="Resolvase, N-terminal catalytic domain"/>
    <property type="match status" value="1"/>
</dbReference>
<dbReference type="InterPro" id="IPR009061">
    <property type="entry name" value="DNA-bd_dom_put_sf"/>
</dbReference>
<dbReference type="InterPro" id="IPR000551">
    <property type="entry name" value="MerR-type_HTH_dom"/>
</dbReference>
<dbReference type="InterPro" id="IPR051491">
    <property type="entry name" value="Recombinase/Transposase-rel"/>
</dbReference>
<dbReference type="InterPro" id="IPR006118">
    <property type="entry name" value="Recombinase_CS"/>
</dbReference>
<dbReference type="InterPro" id="IPR006119">
    <property type="entry name" value="Resolv_N"/>
</dbReference>
<dbReference type="InterPro" id="IPR036162">
    <property type="entry name" value="Resolvase-like_N_sf"/>
</dbReference>
<dbReference type="InterPro" id="IPR048046">
    <property type="entry name" value="Transpos_IS607"/>
</dbReference>
<dbReference type="NCBIfam" id="NF033518">
    <property type="entry name" value="transpos_IS607"/>
    <property type="match status" value="1"/>
</dbReference>
<dbReference type="PANTHER" id="PTHR36172">
    <property type="match status" value="1"/>
</dbReference>
<dbReference type="PANTHER" id="PTHR36172:SF1">
    <property type="entry name" value="RESOLVASE-RELATED"/>
    <property type="match status" value="1"/>
</dbReference>
<dbReference type="Pfam" id="PF00376">
    <property type="entry name" value="MerR"/>
    <property type="match status" value="1"/>
</dbReference>
<dbReference type="Pfam" id="PF00239">
    <property type="entry name" value="Resolvase"/>
    <property type="match status" value="1"/>
</dbReference>
<dbReference type="SMART" id="SM00857">
    <property type="entry name" value="Resolvase"/>
    <property type="match status" value="1"/>
</dbReference>
<dbReference type="SUPFAM" id="SSF46955">
    <property type="entry name" value="Putative DNA-binding domain"/>
    <property type="match status" value="1"/>
</dbReference>
<dbReference type="SUPFAM" id="SSF53041">
    <property type="entry name" value="Resolvase-like"/>
    <property type="match status" value="1"/>
</dbReference>
<dbReference type="PROSITE" id="PS00397">
    <property type="entry name" value="RECOMBINASES_1"/>
    <property type="match status" value="1"/>
</dbReference>
<dbReference type="PROSITE" id="PS51736">
    <property type="entry name" value="RECOMBINASES_3"/>
    <property type="match status" value="1"/>
</dbReference>
<sequence>MPKYVRRKEVLEVLKVHYQTLYRMEEKGLIEVKRTNGGHRLYNLEKYLRDNGLDNKEKKGICYCRVSSKKQIKDLNRQVEYMEKNYPEYEIIKDIGSGINMERKGLLQLIQMAIDGEISEVVVTYKDRLARFGFELIEWIIKTYSNGQIKIIHKREEETPEEEITRDILQIMNVYVAKINGKKSGKLKAKK</sequence>
<protein>
    <recommendedName>
        <fullName>Putative resolvase L103</fullName>
    </recommendedName>
</protein>